<proteinExistence type="inferred from homology"/>
<dbReference type="EC" id="2.1.1.-"/>
<dbReference type="EC" id="2.7.7.-"/>
<dbReference type="EC" id="2.7.7.48"/>
<dbReference type="EC" id="3.6.4.13"/>
<dbReference type="EMBL" id="AJ132845">
    <property type="protein sequence ID" value="CAB36997.1"/>
    <property type="molecule type" value="Genomic_RNA"/>
</dbReference>
<dbReference type="EMBL" id="AJ132845">
    <property type="protein sequence ID" value="CAB36998.1"/>
    <property type="molecule type" value="Genomic_RNA"/>
</dbReference>
<dbReference type="Proteomes" id="UP000008254">
    <property type="component" value="Genome"/>
</dbReference>
<dbReference type="GO" id="GO:0005524">
    <property type="term" value="F:ATP binding"/>
    <property type="evidence" value="ECO:0007669"/>
    <property type="project" value="UniProtKB-KW"/>
</dbReference>
<dbReference type="GO" id="GO:0016887">
    <property type="term" value="F:ATP hydrolysis activity"/>
    <property type="evidence" value="ECO:0007669"/>
    <property type="project" value="RHEA"/>
</dbReference>
<dbReference type="GO" id="GO:0008174">
    <property type="term" value="F:mRNA methyltransferase activity"/>
    <property type="evidence" value="ECO:0007669"/>
    <property type="project" value="InterPro"/>
</dbReference>
<dbReference type="GO" id="GO:0003723">
    <property type="term" value="F:RNA binding"/>
    <property type="evidence" value="ECO:0007669"/>
    <property type="project" value="InterPro"/>
</dbReference>
<dbReference type="GO" id="GO:0003724">
    <property type="term" value="F:RNA helicase activity"/>
    <property type="evidence" value="ECO:0007669"/>
    <property type="project" value="UniProtKB-EC"/>
</dbReference>
<dbReference type="GO" id="GO:0003968">
    <property type="term" value="F:RNA-directed RNA polymerase activity"/>
    <property type="evidence" value="ECO:0007669"/>
    <property type="project" value="UniProtKB-KW"/>
</dbReference>
<dbReference type="GO" id="GO:0006351">
    <property type="term" value="P:DNA-templated transcription"/>
    <property type="evidence" value="ECO:0007669"/>
    <property type="project" value="InterPro"/>
</dbReference>
<dbReference type="GO" id="GO:0016556">
    <property type="term" value="P:mRNA modification"/>
    <property type="evidence" value="ECO:0007669"/>
    <property type="project" value="InterPro"/>
</dbReference>
<dbReference type="GO" id="GO:0006396">
    <property type="term" value="P:RNA processing"/>
    <property type="evidence" value="ECO:0007669"/>
    <property type="project" value="InterPro"/>
</dbReference>
<dbReference type="GO" id="GO:0052170">
    <property type="term" value="P:symbiont-mediated suppression of host innate immune response"/>
    <property type="evidence" value="ECO:0007669"/>
    <property type="project" value="UniProtKB-KW"/>
</dbReference>
<dbReference type="GO" id="GO:0039694">
    <property type="term" value="P:viral RNA genome replication"/>
    <property type="evidence" value="ECO:0007669"/>
    <property type="project" value="InterPro"/>
</dbReference>
<dbReference type="CDD" id="cd23251">
    <property type="entry name" value="Virgaviridae_RdRp"/>
    <property type="match status" value="1"/>
</dbReference>
<dbReference type="Gene3D" id="3.30.450.420">
    <property type="match status" value="1"/>
</dbReference>
<dbReference type="Gene3D" id="3.40.50.300">
    <property type="entry name" value="P-loop containing nucleotide triphosphate hydrolases"/>
    <property type="match status" value="2"/>
</dbReference>
<dbReference type="InterPro" id="IPR027351">
    <property type="entry name" value="(+)RNA_virus_helicase_core_dom"/>
</dbReference>
<dbReference type="InterPro" id="IPR002588">
    <property type="entry name" value="Alphavirus-like_MT_dom"/>
</dbReference>
<dbReference type="InterPro" id="IPR043502">
    <property type="entry name" value="DNA/RNA_pol_sf"/>
</dbReference>
<dbReference type="InterPro" id="IPR027417">
    <property type="entry name" value="P-loop_NTPase"/>
</dbReference>
<dbReference type="InterPro" id="IPR001788">
    <property type="entry name" value="RNA-dep_RNA_pol_alsuvir"/>
</dbReference>
<dbReference type="InterPro" id="IPR007094">
    <property type="entry name" value="RNA-dir_pol_PSvirus"/>
</dbReference>
<dbReference type="InterPro" id="IPR047310">
    <property type="entry name" value="Virgaviridae_RdRp"/>
</dbReference>
<dbReference type="Pfam" id="PF00978">
    <property type="entry name" value="RdRP_2"/>
    <property type="match status" value="1"/>
</dbReference>
<dbReference type="Pfam" id="PF01443">
    <property type="entry name" value="Viral_helicase1"/>
    <property type="match status" value="1"/>
</dbReference>
<dbReference type="Pfam" id="PF01660">
    <property type="entry name" value="Vmethyltransf"/>
    <property type="match status" value="1"/>
</dbReference>
<dbReference type="SUPFAM" id="SSF56672">
    <property type="entry name" value="DNA/RNA polymerases"/>
    <property type="match status" value="1"/>
</dbReference>
<dbReference type="SUPFAM" id="SSF52540">
    <property type="entry name" value="P-loop containing nucleoside triphosphate hydrolases"/>
    <property type="match status" value="1"/>
</dbReference>
<dbReference type="PROSITE" id="PS51743">
    <property type="entry name" value="ALPHAVIRUS_MT"/>
    <property type="match status" value="1"/>
</dbReference>
<dbReference type="PROSITE" id="PS51657">
    <property type="entry name" value="PSRV_HELICASE"/>
    <property type="match status" value="1"/>
</dbReference>
<dbReference type="PROSITE" id="PS50507">
    <property type="entry name" value="RDRP_SSRNA_POS"/>
    <property type="match status" value="1"/>
</dbReference>
<feature type="chain" id="PRO_0000041196" description="Replicase large subunit">
    <location>
        <begin position="1"/>
        <end position="1616"/>
    </location>
</feature>
<feature type="chain" id="PRO_0000041197" description="Replicase small subunit">
    <location>
        <begin position="1"/>
        <end position="1116"/>
    </location>
</feature>
<feature type="domain" description="Alphavirus-like MT" evidence="4">
    <location>
        <begin position="72"/>
        <end position="281"/>
    </location>
</feature>
<feature type="domain" description="(+)RNA virus helicase ATP-binding">
    <location>
        <begin position="801"/>
        <end position="963"/>
    </location>
</feature>
<feature type="domain" description="(+)RNA virus helicase C-terminal">
    <location>
        <begin position="964"/>
        <end position="1116"/>
    </location>
</feature>
<feature type="domain" description="RdRp catalytic" evidence="3">
    <location>
        <begin position="1380"/>
        <end position="1493"/>
    </location>
</feature>
<feature type="region of interest" description="Methyltransferase">
    <location>
        <begin position="50"/>
        <end position="441"/>
    </location>
</feature>
<feature type="region of interest" description="Helicase">
    <location>
        <begin position="830"/>
        <end position="1085"/>
    </location>
</feature>
<feature type="binding site" evidence="2">
    <location>
        <begin position="833"/>
        <end position="840"/>
    </location>
    <ligand>
        <name>ATP</name>
        <dbReference type="ChEBI" id="CHEBI:30616"/>
    </ligand>
</feature>
<organismHost>
    <name type="scientific">Antirrhinum majus</name>
    <name type="common">Garden snapdragon</name>
    <dbReference type="NCBI Taxonomy" id="4151"/>
</organismHost>
<organismHost>
    <name type="scientific">Capsicum</name>
    <name type="common">peppers</name>
    <dbReference type="NCBI Taxonomy" id="4071"/>
</organismHost>
<organismHost>
    <name type="scientific">Delphinium</name>
    <dbReference type="NCBI Taxonomy" id="46246"/>
</organismHost>
<organismHost>
    <name type="scientific">Petunia</name>
    <dbReference type="NCBI Taxonomy" id="4101"/>
</organismHost>
<organismHost>
    <name type="scientific">Solanum lycopersicum</name>
    <name type="common">Tomato</name>
    <name type="synonym">Lycopersicon esculentum</name>
    <dbReference type="NCBI Taxonomy" id="4081"/>
</organismHost>
<organismHost>
    <name type="scientific">Tagetes</name>
    <name type="common">marigolds</name>
    <dbReference type="NCBI Taxonomy" id="13707"/>
</organismHost>
<reference key="1">
    <citation type="submission" date="1999-02" db="EMBL/GenBank/DDBJ databases">
        <title>Complete nucleotide sequence of a Chinese isolate of tomato mosaic virus.</title>
        <authorList>
            <person name="Zhou X."/>
            <person name="Xue C."/>
            <person name="Chen Q."/>
            <person name="Qi Y."/>
            <person name="Li D."/>
        </authorList>
    </citation>
    <scope>NUCLEOTIDE SEQUENCE [GENOMIC RNA]</scope>
</reference>
<sequence>MAYTQTATSSALLETIRGNNTLVNDLAKRRLYDTAVDEFNARDRRPKVNFSKVVSEEQTLIATKAYPEFQITFYNTQNAVHSLAGGLRSLELEYLMMQIPYGSLTYDIGGNFASHLFKGRAYVHCCMPNLDVRDIMRHEGQKDSIELYLSRLERGNKHVPNFQKEAFDRYAEMPNEVVCHDTFQTCGHSQECYTGRVYAIALHSIYDIPADEFGAALLRKNVHVCYAAFHFSENLLLEDSHVNLDEINACFQRDGDRLTFSFASESTLNYSHSYSNILKYVCKTYFPASNREVYMKEFLVTRVNTWFCKFSRIDTFLLYKGVAHKGVDSEQFYKAMEDAWHYKKTLAMCNSERILLEDSSSVNYWFPKMRDMVIVPLFDISLETSKRTRKEVLVLKDFVYTVLNHIRTYQAKALTYSNVLSFVESIRSRVIINGVTARSEWDVDKSLLQSLSMTFFLHIKLAVLKDDLLISKFALGPKTVSQHVWDEISLAFGNAFPSIKERLINRKLIKITENALEIRVPDLYVTFHDRLVSEYKMSVDMPVLDIRKKMEETEEMYNALSELSVLKNSDKFDVDVFSQMCQSLEVDPMTAAKVIVAVMSNESGLTLTFEQPTEANVALALQDSEKASDGALVVTSRDVEEPSIKGSMARGELQLAGLSGDVPESSYTRSEEIESLEQFHMATASSLIHKQMCSIVYTGPLKVQQMKNFIDSLVASLSAAVSNLVKILKDTAAIDLETRQKFGVLDVASKRWLVKPSAKNHAWGVVETHARKYHVALLEHDEFGIITCDNWRRVAVSPESVVYSDMAKLRTLRRLLKDGEPHVSSAKVVLVDGVPGCGKTKEILSRVNFEEDLILVPGRQAAEMIRRRANASGIIVATKDNVRTVDSFLMNYGKGARCQFKRLFIDEGLMLHTGCVNFLVEMSLSDIAYVYGDTQQIPYINRVTGFPYPAHFAKLEVDEVETRRTTLRCPADVTHFLNQRYEGHVMCTSSEKKSVSQEMVSGAASINPVSKPLKGKILTFTQSDKEALLSRGYTDVHTVHEVQGETYADVSLVRLTPTPVSIIARDSPHVLVSLSRHTKSLKYYTVVMDPLVSIIRDLERVSSYLLDMYKVDAGTQXQLQVDSVFKNFNLFVATPKTGDISDMQFYYDKCLPGNSTLLNNYDAVTMKLTDISLNVKDCILDMSKSVAAPKDAKPTLIPMVRTAAEMPRQTGLLENLVAMIKRNFNSPELSGVVDIENTASLVVDKFFDSYLLKEKRKPNKNFSLFSRESLNRWIAKQEQVTIGQLADFDFVDLPAVDQYRHMIKAQPKQKLDLSIQTEYPALQTIVYHSKKINAIFGPLFSELTRQLLDSIDSSRFLFFTRKTPAQIEDFFGDLDSHVPMDVLELDVSKYDKSQNEFHCAVEYEIWRRLGLEDFLAEVWKQGHRKTTLKDYTAGIKTCLWYQRKSGDVTTFIGNTVIIASCLASMLPMEKLIKGAFCGDDSLLYFPKGCEYPDIQQAANLMWNFEAKLFKKQYGYFCGRYVIHHDRGCIVYYDPLKLISKLGAKHIKDWDHLEEFRRSLCNVAESLNNCAYYTQLDDAVGEVHKTAPPGSFVYKSLVKYLSDKVLFRSLFLDGSSC</sequence>
<accession>Q9YKD6</accession>
<accession>Q9WJ37</accession>
<protein>
    <recommendedName>
        <fullName>Replicase large subunit</fullName>
        <ecNumber>2.1.1.-</ecNumber>
        <ecNumber>2.7.7.-</ecNumber>
        <ecNumber>2.7.7.48</ecNumber>
        <ecNumber>3.6.4.13</ecNumber>
    </recommendedName>
    <alternativeName>
        <fullName>183 kDa protein</fullName>
    </alternativeName>
    <alternativeName>
        <fullName>RNA-directed RNA polymerase</fullName>
    </alternativeName>
    <component>
        <recommendedName>
            <fullName>Replicase small subunit</fullName>
            <ecNumber>2.1.1.-</ecNumber>
            <ecNumber>2.7.7.-</ecNumber>
            <ecNumber>3.6.4.13</ecNumber>
        </recommendedName>
        <alternativeName>
            <fullName>126 kDa protein</fullName>
        </alternativeName>
        <alternativeName>
            <fullName>Methyltransferase/RNA helicase</fullName>
            <shortName>MT/HEL</shortName>
        </alternativeName>
    </component>
</protein>
<name>RDRP_TOMS1</name>
<organism>
    <name type="scientific">Tomato mosaic virus (strain S-1)</name>
    <name type="common">ToMV</name>
    <dbReference type="NCBI Taxonomy" id="138314"/>
    <lineage>
        <taxon>Viruses</taxon>
        <taxon>Riboviria</taxon>
        <taxon>Orthornavirae</taxon>
        <taxon>Kitrinoviricota</taxon>
        <taxon>Alsuviricetes</taxon>
        <taxon>Martellivirales</taxon>
        <taxon>Virgaviridae</taxon>
        <taxon>Tobamovirus</taxon>
        <taxon>Tomato mosaic virus</taxon>
    </lineage>
</organism>
<keyword id="KW-0067">ATP-binding</keyword>
<keyword id="KW-0347">Helicase</keyword>
<keyword id="KW-0945">Host-virus interaction</keyword>
<keyword id="KW-0378">Hydrolase</keyword>
<keyword id="KW-1090">Inhibition of host innate immune response by virus</keyword>
<keyword id="KW-0547">Nucleotide-binding</keyword>
<keyword id="KW-0548">Nucleotidyltransferase</keyword>
<keyword id="KW-1159">RNA suppression of termination</keyword>
<keyword id="KW-0696">RNA-directed RNA polymerase</keyword>
<keyword id="KW-0941">Suppressor of RNA silencing</keyword>
<keyword id="KW-0808">Transferase</keyword>
<keyword id="KW-0899">Viral immunoevasion</keyword>
<keyword id="KW-0693">Viral RNA replication</keyword>
<evidence type="ECO:0000250" key="1"/>
<evidence type="ECO:0000255" key="2"/>
<evidence type="ECO:0000255" key="3">
    <source>
        <dbReference type="PROSITE-ProRule" id="PRU00539"/>
    </source>
</evidence>
<evidence type="ECO:0000255" key="4">
    <source>
        <dbReference type="PROSITE-ProRule" id="PRU01079"/>
    </source>
</evidence>
<evidence type="ECO:0000305" key="5"/>
<comment type="function">
    <molecule>Replicase large subunit</molecule>
    <text>Is an RNA-dependent RNA polymerase active in viral RNA replication.</text>
</comment>
<comment type="function">
    <molecule>Replicase small subunit</molecule>
    <text evidence="1 5">Is a methyltransferase active in RNA capping and an RNA helicase. Methyltransferase displays a cytoplasmic capping enzyme activity. This function is necessary since all viral RNAs are synthesized in the cytoplasm, and host capping enzymes are restricted to the nucleus. Helicase region probably exhibits NTPase and RNA unwinding activities (Potential). It also acts as a suppressor of RNA-mediated gene silencing, also known as post-transcriptional gene silencing (PTGS), a mechanism of plant viral defense that limits the accumulation of viral RNAs. May mediate silencing suppression through either inhibition of HEN1-mediated siRNA or siRNA demethylation (By similarity).</text>
</comment>
<comment type="catalytic activity">
    <reaction evidence="3">
        <text>RNA(n) + a ribonucleoside 5'-triphosphate = RNA(n+1) + diphosphate</text>
        <dbReference type="Rhea" id="RHEA:21248"/>
        <dbReference type="Rhea" id="RHEA-COMP:14527"/>
        <dbReference type="Rhea" id="RHEA-COMP:17342"/>
        <dbReference type="ChEBI" id="CHEBI:33019"/>
        <dbReference type="ChEBI" id="CHEBI:61557"/>
        <dbReference type="ChEBI" id="CHEBI:140395"/>
        <dbReference type="EC" id="2.7.7.48"/>
    </reaction>
</comment>
<comment type="catalytic activity">
    <reaction>
        <text>ATP + H2O = ADP + phosphate + H(+)</text>
        <dbReference type="Rhea" id="RHEA:13065"/>
        <dbReference type="ChEBI" id="CHEBI:15377"/>
        <dbReference type="ChEBI" id="CHEBI:15378"/>
        <dbReference type="ChEBI" id="CHEBI:30616"/>
        <dbReference type="ChEBI" id="CHEBI:43474"/>
        <dbReference type="ChEBI" id="CHEBI:456216"/>
        <dbReference type="EC" id="3.6.4.13"/>
    </reaction>
</comment>
<comment type="subunit">
    <text evidence="1">Heterodimer of a large and a small subunit.</text>
</comment>
<comment type="miscellaneous">
    <text>This protein is translated as a fusion protein by episodic readthrough of a termination codon. When readthrough of the terminator codon TGA occurs between the codons for Gln-1116 and Gln-1118, this results in the addition of the RdRp region to the replicase.</text>
</comment>
<comment type="similarity">
    <text evidence="5">Belongs to the ssRNA positive-strand viruses RNA-directed RNA polymerase family.</text>
</comment>